<comment type="function">
    <text evidence="3">The enzyme has great affinity for glucose. Mannose, 2-deoxyglucose and glucosamine can serve as substrates.</text>
</comment>
<comment type="catalytic activity">
    <reaction evidence="3">
        <text>D-glucose + ATP = D-glucose 6-phosphate + ADP + H(+)</text>
        <dbReference type="Rhea" id="RHEA:17825"/>
        <dbReference type="ChEBI" id="CHEBI:4167"/>
        <dbReference type="ChEBI" id="CHEBI:15378"/>
        <dbReference type="ChEBI" id="CHEBI:30616"/>
        <dbReference type="ChEBI" id="CHEBI:61548"/>
        <dbReference type="ChEBI" id="CHEBI:456216"/>
        <dbReference type="EC" id="2.7.1.2"/>
    </reaction>
    <physiologicalReaction direction="left-to-right" evidence="3">
        <dbReference type="Rhea" id="RHEA:17826"/>
    </physiologicalReaction>
</comment>
<comment type="catalytic activity">
    <reaction evidence="3">
        <text>a D-hexose + ATP = a D-hexose 6-phosphate + ADP + H(+)</text>
        <dbReference type="Rhea" id="RHEA:22740"/>
        <dbReference type="ChEBI" id="CHEBI:4194"/>
        <dbReference type="ChEBI" id="CHEBI:15378"/>
        <dbReference type="ChEBI" id="CHEBI:30616"/>
        <dbReference type="ChEBI" id="CHEBI:229467"/>
        <dbReference type="ChEBI" id="CHEBI:456216"/>
        <dbReference type="EC" id="2.7.1.1"/>
    </reaction>
    <physiologicalReaction direction="left-to-right" evidence="3">
        <dbReference type="Rhea" id="RHEA:22741"/>
    </physiologicalReaction>
</comment>
<comment type="catalytic activity">
    <reaction evidence="3">
        <text>D-mannose + ATP = D-mannose 6-phosphate + ADP + H(+)</text>
        <dbReference type="Rhea" id="RHEA:11028"/>
        <dbReference type="ChEBI" id="CHEBI:4208"/>
        <dbReference type="ChEBI" id="CHEBI:15378"/>
        <dbReference type="ChEBI" id="CHEBI:30616"/>
        <dbReference type="ChEBI" id="CHEBI:58735"/>
        <dbReference type="ChEBI" id="CHEBI:456216"/>
        <dbReference type="EC" id="2.7.1.1"/>
    </reaction>
    <physiologicalReaction direction="left-to-right" evidence="3">
        <dbReference type="Rhea" id="RHEA:11029"/>
    </physiologicalReaction>
</comment>
<comment type="catalytic activity">
    <reaction evidence="3">
        <text>D-glucosamine + ATP = D-glucosamine 6-phosphate + ADP + H(+)</text>
        <dbReference type="Rhea" id="RHEA:10948"/>
        <dbReference type="ChEBI" id="CHEBI:15378"/>
        <dbReference type="ChEBI" id="CHEBI:30616"/>
        <dbReference type="ChEBI" id="CHEBI:58723"/>
        <dbReference type="ChEBI" id="CHEBI:58725"/>
        <dbReference type="ChEBI" id="CHEBI:456216"/>
        <dbReference type="EC" id="2.7.1.1"/>
    </reaction>
    <physiologicalReaction direction="left-to-right" evidence="3">
        <dbReference type="Rhea" id="RHEA:10949"/>
    </physiologicalReaction>
</comment>
<comment type="biophysicochemical properties">
    <phDependence>
        <text>Activity is relatively constant from pH 7.5 to 9.0. Below pH 7.5, activity decreases with pH.</text>
    </phDependence>
</comment>
<comment type="pathway">
    <text evidence="5">Carbohydrate metabolism; hexose metabolism.</text>
</comment>
<comment type="pathway">
    <text evidence="5">Carbohydrate degradation; glycolysis; D-glyceraldehyde 3-phosphate and glycerone phosphate from D-glucose: step 1/4.</text>
</comment>
<comment type="subunit">
    <text evidence="4">Monomer.</text>
</comment>
<comment type="similarity">
    <text evidence="2 4">Belongs to the hexokinase family.</text>
</comment>
<evidence type="ECO:0000255" key="1"/>
<evidence type="ECO:0000255" key="2">
    <source>
        <dbReference type="PROSITE-ProRule" id="PRU01084"/>
    </source>
</evidence>
<evidence type="ECO:0000269" key="3">
    <source>
    </source>
</evidence>
<evidence type="ECO:0000305" key="4"/>
<evidence type="ECO:0000305" key="5">
    <source>
    </source>
</evidence>
<feature type="chain" id="PRO_0000197611" description="Glucokinase">
    <location>
        <begin position="1"/>
        <end position="495"/>
    </location>
</feature>
<feature type="domain" description="Hexokinase" evidence="2">
    <location>
        <begin position="3"/>
        <end position="483"/>
    </location>
</feature>
<feature type="region of interest" description="Hexokinase small subdomain" evidence="2">
    <location>
        <begin position="57"/>
        <end position="206"/>
    </location>
</feature>
<feature type="region of interest" description="Glucose-binding" evidence="1">
    <location>
        <begin position="149"/>
        <end position="175"/>
    </location>
</feature>
<feature type="region of interest" description="Hexokinase large subdomain" evidence="2">
    <location>
        <begin position="207"/>
        <end position="472"/>
    </location>
</feature>
<feature type="binding site" evidence="1">
    <location>
        <position position="93"/>
    </location>
    <ligand>
        <name>ATP</name>
        <dbReference type="ChEBI" id="CHEBI:30616"/>
    </ligand>
</feature>
<feature type="binding site" evidence="1">
    <location>
        <begin position="472"/>
        <end position="477"/>
    </location>
    <ligand>
        <name>ATP</name>
        <dbReference type="ChEBI" id="CHEBI:30616"/>
    </ligand>
</feature>
<reference key="1">
    <citation type="journal article" date="1996" name="Eur. J. Biochem.">
        <title>Cloning and biochemical characterisation of an Aspergillus niger glucokinase. Evidence for the presence of separate glucokinase and hexokinase enzymes.</title>
        <authorList>
            <person name="Panneman H."/>
            <person name="Ruijter G.J.G."/>
            <person name="van den Broeck H.C."/>
            <person name="Driever E.T.M."/>
            <person name="Visser J."/>
        </authorList>
    </citation>
    <scope>NUCLEOTIDE SEQUENCE [GENOMIC DNA]</scope>
    <scope>FUNCTION</scope>
    <scope>CATALYTIC ACTIVITY</scope>
    <source>
        <strain>ATCC 9029 / NRRL 3 / CBS 120.49 / DSM 2466 / N400 / FGSC 732</strain>
    </source>
</reference>
<organism>
    <name type="scientific">Aspergillus niger</name>
    <dbReference type="NCBI Taxonomy" id="5061"/>
    <lineage>
        <taxon>Eukaryota</taxon>
        <taxon>Fungi</taxon>
        <taxon>Dikarya</taxon>
        <taxon>Ascomycota</taxon>
        <taxon>Pezizomycotina</taxon>
        <taxon>Eurotiomycetes</taxon>
        <taxon>Eurotiomycetidae</taxon>
        <taxon>Eurotiales</taxon>
        <taxon>Aspergillaceae</taxon>
        <taxon>Aspergillus</taxon>
        <taxon>Aspergillus subgen. Circumdati</taxon>
    </lineage>
</organism>
<protein>
    <recommendedName>
        <fullName>Glucokinase</fullName>
        <ecNumber evidence="3">2.7.1.2</ecNumber>
    </recommendedName>
    <alternativeName>
        <fullName>Glucose kinase</fullName>
        <shortName>GLK</shortName>
    </alternativeName>
    <alternativeName>
        <fullName evidence="4">Hexokinase glkA</fullName>
        <ecNumber evidence="3">2.7.1.1</ecNumber>
    </alternativeName>
</protein>
<gene>
    <name type="primary">glkA</name>
</gene>
<dbReference type="EC" id="2.7.1.2" evidence="3"/>
<dbReference type="EC" id="2.7.1.1" evidence="3"/>
<dbReference type="EMBL" id="X99626">
    <property type="protein sequence ID" value="CAA67949.1"/>
    <property type="molecule type" value="Genomic_DNA"/>
</dbReference>
<dbReference type="PIR" id="S74210">
    <property type="entry name" value="S74210"/>
</dbReference>
<dbReference type="SMR" id="Q92407"/>
<dbReference type="PaxDb" id="5061-CADANGAP00010094"/>
<dbReference type="VEuPathDB" id="FungiDB:An12g08610"/>
<dbReference type="VEuPathDB" id="FungiDB:ASPNIDRAFT2_1143262"/>
<dbReference type="VEuPathDB" id="FungiDB:ATCC64974_34790"/>
<dbReference type="VEuPathDB" id="FungiDB:M747DRAFT_15974"/>
<dbReference type="eggNOG" id="KOG1369">
    <property type="taxonomic scope" value="Eukaryota"/>
</dbReference>
<dbReference type="OrthoDB" id="419537at2759"/>
<dbReference type="BRENDA" id="2.7.1.2">
    <property type="organism ID" value="518"/>
</dbReference>
<dbReference type="UniPathway" id="UPA00109">
    <property type="reaction ID" value="UER00180"/>
</dbReference>
<dbReference type="UniPathway" id="UPA00242"/>
<dbReference type="GO" id="GO:0005829">
    <property type="term" value="C:cytosol"/>
    <property type="evidence" value="ECO:0007669"/>
    <property type="project" value="TreeGrafter"/>
</dbReference>
<dbReference type="GO" id="GO:0005739">
    <property type="term" value="C:mitochondrion"/>
    <property type="evidence" value="ECO:0007669"/>
    <property type="project" value="TreeGrafter"/>
</dbReference>
<dbReference type="GO" id="GO:0005524">
    <property type="term" value="F:ATP binding"/>
    <property type="evidence" value="ECO:0007669"/>
    <property type="project" value="UniProtKB-KW"/>
</dbReference>
<dbReference type="GO" id="GO:0005536">
    <property type="term" value="F:D-glucose binding"/>
    <property type="evidence" value="ECO:0007669"/>
    <property type="project" value="InterPro"/>
</dbReference>
<dbReference type="GO" id="GO:0008865">
    <property type="term" value="F:fructokinase activity"/>
    <property type="evidence" value="ECO:0007669"/>
    <property type="project" value="TreeGrafter"/>
</dbReference>
<dbReference type="GO" id="GO:0004340">
    <property type="term" value="F:glucokinase activity"/>
    <property type="evidence" value="ECO:0007669"/>
    <property type="project" value="UniProtKB-EC"/>
</dbReference>
<dbReference type="GO" id="GO:0047931">
    <property type="term" value="F:glucosamine kinase activity"/>
    <property type="evidence" value="ECO:0007669"/>
    <property type="project" value="RHEA"/>
</dbReference>
<dbReference type="GO" id="GO:0019158">
    <property type="term" value="F:mannokinase activity"/>
    <property type="evidence" value="ECO:0007669"/>
    <property type="project" value="RHEA"/>
</dbReference>
<dbReference type="GO" id="GO:0006006">
    <property type="term" value="P:glucose metabolic process"/>
    <property type="evidence" value="ECO:0007669"/>
    <property type="project" value="TreeGrafter"/>
</dbReference>
<dbReference type="GO" id="GO:0006096">
    <property type="term" value="P:glycolytic process"/>
    <property type="evidence" value="ECO:0007669"/>
    <property type="project" value="UniProtKB-UniPathway"/>
</dbReference>
<dbReference type="GO" id="GO:0001678">
    <property type="term" value="P:intracellular glucose homeostasis"/>
    <property type="evidence" value="ECO:0007669"/>
    <property type="project" value="InterPro"/>
</dbReference>
<dbReference type="FunFam" id="3.30.420.40:FF:000034">
    <property type="entry name" value="Phosphotransferase"/>
    <property type="match status" value="1"/>
</dbReference>
<dbReference type="FunFam" id="3.40.367.20:FF:000006">
    <property type="entry name" value="Phosphotransferase"/>
    <property type="match status" value="1"/>
</dbReference>
<dbReference type="Gene3D" id="3.30.420.40">
    <property type="match status" value="1"/>
</dbReference>
<dbReference type="Gene3D" id="3.40.367.20">
    <property type="match status" value="1"/>
</dbReference>
<dbReference type="InterPro" id="IPR043129">
    <property type="entry name" value="ATPase_NBD"/>
</dbReference>
<dbReference type="InterPro" id="IPR001312">
    <property type="entry name" value="Hexokinase"/>
</dbReference>
<dbReference type="InterPro" id="IPR019807">
    <property type="entry name" value="Hexokinase_BS"/>
</dbReference>
<dbReference type="InterPro" id="IPR022673">
    <property type="entry name" value="Hexokinase_C"/>
</dbReference>
<dbReference type="InterPro" id="IPR022672">
    <property type="entry name" value="Hexokinase_N"/>
</dbReference>
<dbReference type="PANTHER" id="PTHR19443:SF30">
    <property type="entry name" value="GLUCOKINASE-1-RELATED"/>
    <property type="match status" value="1"/>
</dbReference>
<dbReference type="PANTHER" id="PTHR19443">
    <property type="entry name" value="HEXOKINASE"/>
    <property type="match status" value="1"/>
</dbReference>
<dbReference type="Pfam" id="PF00349">
    <property type="entry name" value="Hexokinase_1"/>
    <property type="match status" value="1"/>
</dbReference>
<dbReference type="Pfam" id="PF03727">
    <property type="entry name" value="Hexokinase_2"/>
    <property type="match status" value="1"/>
</dbReference>
<dbReference type="PRINTS" id="PR00475">
    <property type="entry name" value="HEXOKINASE"/>
</dbReference>
<dbReference type="SUPFAM" id="SSF53067">
    <property type="entry name" value="Actin-like ATPase domain"/>
    <property type="match status" value="2"/>
</dbReference>
<dbReference type="PROSITE" id="PS00378">
    <property type="entry name" value="HEXOKINASE_1"/>
    <property type="match status" value="1"/>
</dbReference>
<dbReference type="PROSITE" id="PS51748">
    <property type="entry name" value="HEXOKINASE_2"/>
    <property type="match status" value="1"/>
</dbReference>
<keyword id="KW-0067">ATP-binding</keyword>
<keyword id="KW-0324">Glycolysis</keyword>
<keyword id="KW-0418">Kinase</keyword>
<keyword id="KW-0547">Nucleotide-binding</keyword>
<keyword id="KW-0808">Transferase</keyword>
<accession>Q92407</accession>
<sequence>MSSALLDEAARIARQFDYPAAEVQRGVTEYIREIDEGLSKEHTTLSQIPTYVTAVPNGTEKGLYLAVDLGGTNFRVCSIDLHGDTTFSLTQSKIMIPRETMASGTAKDLFLFLARQIESFLRIHHNDHFEAHLRRRNEKNGNCEEDLFDLGFTFSFPVRQLGINKGTLIRWTKGFNIPDAVGKDVCALLQNAIDDLGLPVRVAALVNDTVGTLMARSYTSPGETGTFLGAIFGTGTNGAYVEKLDRITKLQTIEHSEYDKTTGEMIINAEWGSFDNHLSVLPNTIYDQQLDADSNNPGIQMFEKRVSGMFLGEILRRVMLDMQRNESLGFLRAGGASTVSVPQESSLYRQWGIDTSLLSLVEADKTENMEQIKVALKDHLKIERPTTDDCKAIQTVVHAIGKRAARLSAVPLAAILLSTGKLQKDDLVDIGVDGSLVEFYPNFEGYMRDALREVPEVGEAGNKKIRIGISKDGSGVGAALIALVASKEETRRKSQ</sequence>
<name>HXKG_ASPNG</name>
<proteinExistence type="evidence at protein level"/>